<name>STP_MYCTU</name>
<comment type="function">
    <text evidence="2">Contributes to spectinomycin and tetracycline resistance.</text>
</comment>
<comment type="subcellular location">
    <subcellularLocation>
        <location evidence="3">Cell membrane</location>
        <topology evidence="3">Multi-pass membrane protein</topology>
    </subcellularLocation>
</comment>
<comment type="similarity">
    <text evidence="3">Belongs to the major facilitator superfamily. EmrB family.</text>
</comment>
<proteinExistence type="evidence at protein level"/>
<keyword id="KW-0046">Antibiotic resistance</keyword>
<keyword id="KW-1003">Cell membrane</keyword>
<keyword id="KW-0472">Membrane</keyword>
<keyword id="KW-1185">Reference proteome</keyword>
<keyword id="KW-0812">Transmembrane</keyword>
<keyword id="KW-1133">Transmembrane helix</keyword>
<keyword id="KW-0813">Transport</keyword>
<protein>
    <recommendedName>
        <fullName>Multidrug resistance protein Stp</fullName>
    </recommendedName>
    <alternativeName>
        <fullName>Spectinomycin tetracycline efflux pump</fullName>
    </alternativeName>
</protein>
<sequence>MNRTQLLTLIATGLGLFMIFLDALIVNVALPDIQRSFAVGEDGLQWVVASYSLGMAVFIMSAATLADLDGRRRWYLIGVSLFTLGSIACGLAPSIAVLTTARGAQGLGAAAVSVTSLALVSAAFPEAKEKARAIGIWTAIASIGTTTGPTLGGLLVDQWGWRSIFYVNLPMGALVLFLTLCYVEESCNERARRFDLSGQLLFIVAVGALVYAVIEGPQIGWTSVQTIVMLWTAAVGCALFVWLERRSSNPMMDLTLFRDTSYALAIATICTVFFAVYGMLLLTTQFLQNVRGYTPSVTGLMILPFSAAVAIVSPLVGHLVGRIGARVPILAGLCMLMLGLLMLIFSEHRSSALVLVGLGLCGSGVALCLTPITTVAMTAVPAERAGMASGIMSAQRAIGSTIGFAVLGSVLAAWLSATLEPHLERAVPDPVQRHVLAEIIIDSANPRAHVGGIVPRRHIEHRDPVAIAEEDFIEGIRVALLVATATLAVVFLAGWRWFPRDVHTAGSDLSERLPTAMTVECAVSHMPGATWCRLWPA</sequence>
<accession>P9WG91</accession>
<accession>L0TC78</accession>
<accession>O08222</accession>
<accession>P71879</accession>
<accession>Q7D7B2</accession>
<reference key="1">
    <citation type="journal article" date="1998" name="Nature">
        <title>Deciphering the biology of Mycobacterium tuberculosis from the complete genome sequence.</title>
        <authorList>
            <person name="Cole S.T."/>
            <person name="Brosch R."/>
            <person name="Parkhill J."/>
            <person name="Garnier T."/>
            <person name="Churcher C.M."/>
            <person name="Harris D.E."/>
            <person name="Gordon S.V."/>
            <person name="Eiglmeier K."/>
            <person name="Gas S."/>
            <person name="Barry C.E. III"/>
            <person name="Tekaia F."/>
            <person name="Badcock K."/>
            <person name="Basham D."/>
            <person name="Brown D."/>
            <person name="Chillingworth T."/>
            <person name="Connor R."/>
            <person name="Davies R.M."/>
            <person name="Devlin K."/>
            <person name="Feltwell T."/>
            <person name="Gentles S."/>
            <person name="Hamlin N."/>
            <person name="Holroyd S."/>
            <person name="Hornsby T."/>
            <person name="Jagels K."/>
            <person name="Krogh A."/>
            <person name="McLean J."/>
            <person name="Moule S."/>
            <person name="Murphy L.D."/>
            <person name="Oliver S."/>
            <person name="Osborne J."/>
            <person name="Quail M.A."/>
            <person name="Rajandream M.A."/>
            <person name="Rogers J."/>
            <person name="Rutter S."/>
            <person name="Seeger K."/>
            <person name="Skelton S."/>
            <person name="Squares S."/>
            <person name="Squares R."/>
            <person name="Sulston J.E."/>
            <person name="Taylor K."/>
            <person name="Whitehead S."/>
            <person name="Barrell B.G."/>
        </authorList>
    </citation>
    <scope>NUCLEOTIDE SEQUENCE [LARGE SCALE GENOMIC DNA]</scope>
    <source>
        <strain>ATCC 25618 / H37Rv</strain>
    </source>
</reference>
<reference key="2">
    <citation type="journal article" date="2007" name="J. Antimicrob. Chemother.">
        <title>Contribution of the Rv2333c efflux pump (the Stp protein) from Mycobacterium tuberculosis to intrinsic antibiotic resistance in Mycobacterium bovis BCG.</title>
        <authorList>
            <person name="Ramon-Garcia S."/>
            <person name="Martin C."/>
            <person name="De Rossi E."/>
            <person name="Ainsa J.A."/>
        </authorList>
    </citation>
    <scope>FUNCTION IN ANTIBIOTIC RESISTANCE</scope>
</reference>
<organism>
    <name type="scientific">Mycobacterium tuberculosis (strain ATCC 25618 / H37Rv)</name>
    <dbReference type="NCBI Taxonomy" id="83332"/>
    <lineage>
        <taxon>Bacteria</taxon>
        <taxon>Bacillati</taxon>
        <taxon>Actinomycetota</taxon>
        <taxon>Actinomycetes</taxon>
        <taxon>Mycobacteriales</taxon>
        <taxon>Mycobacteriaceae</taxon>
        <taxon>Mycobacterium</taxon>
        <taxon>Mycobacterium tuberculosis complex</taxon>
    </lineage>
</organism>
<evidence type="ECO:0000255" key="1"/>
<evidence type="ECO:0000269" key="2">
    <source>
    </source>
</evidence>
<evidence type="ECO:0000305" key="3"/>
<feature type="chain" id="PRO_0000390886" description="Multidrug resistance protein Stp">
    <location>
        <begin position="1"/>
        <end position="537"/>
    </location>
</feature>
<feature type="transmembrane region" description="Helical" evidence="1">
    <location>
        <begin position="6"/>
        <end position="26"/>
    </location>
</feature>
<feature type="transmembrane region" description="Helical" evidence="1">
    <location>
        <begin position="46"/>
        <end position="66"/>
    </location>
</feature>
<feature type="transmembrane region" description="Helical" evidence="1">
    <location>
        <begin position="77"/>
        <end position="97"/>
    </location>
</feature>
<feature type="transmembrane region" description="Helical" evidence="1">
    <location>
        <begin position="104"/>
        <end position="124"/>
    </location>
</feature>
<feature type="transmembrane region" description="Helical" evidence="1">
    <location>
        <begin position="136"/>
        <end position="156"/>
    </location>
</feature>
<feature type="transmembrane region" description="Helical" evidence="1">
    <location>
        <begin position="163"/>
        <end position="183"/>
    </location>
</feature>
<feature type="transmembrane region" description="Helical" evidence="1">
    <location>
        <begin position="200"/>
        <end position="220"/>
    </location>
</feature>
<feature type="transmembrane region" description="Helical" evidence="1">
    <location>
        <begin position="223"/>
        <end position="243"/>
    </location>
</feature>
<feature type="transmembrane region" description="Helical" evidence="1">
    <location>
        <begin position="262"/>
        <end position="282"/>
    </location>
</feature>
<feature type="transmembrane region" description="Helical" evidence="1">
    <location>
        <begin position="300"/>
        <end position="320"/>
    </location>
</feature>
<feature type="transmembrane region" description="Helical" evidence="1">
    <location>
        <begin position="327"/>
        <end position="347"/>
    </location>
</feature>
<feature type="transmembrane region" description="Helical" evidence="1">
    <location>
        <begin position="352"/>
        <end position="372"/>
    </location>
</feature>
<feature type="transmembrane region" description="Helical" evidence="1">
    <location>
        <begin position="397"/>
        <end position="417"/>
    </location>
</feature>
<feature type="transmembrane region" description="Helical" evidence="1">
    <location>
        <begin position="478"/>
        <end position="498"/>
    </location>
</feature>
<gene>
    <name type="primary">stp</name>
    <name type="ordered locus">Rv2333c</name>
</gene>
<dbReference type="EMBL" id="AL123456">
    <property type="protein sequence ID" value="CCP45121.1"/>
    <property type="molecule type" value="Genomic_DNA"/>
</dbReference>
<dbReference type="PIR" id="F70705">
    <property type="entry name" value="F70705"/>
</dbReference>
<dbReference type="RefSeq" id="NP_216849.1">
    <property type="nucleotide sequence ID" value="NC_000962.3"/>
</dbReference>
<dbReference type="RefSeq" id="WP_003906797.1">
    <property type="nucleotide sequence ID" value="NZ_NVQJ01000012.1"/>
</dbReference>
<dbReference type="SMR" id="P9WG91"/>
<dbReference type="FunCoup" id="P9WG91">
    <property type="interactions" value="34"/>
</dbReference>
<dbReference type="STRING" id="83332.Rv2333c"/>
<dbReference type="PaxDb" id="83332-Rv2333c"/>
<dbReference type="DNASU" id="887274"/>
<dbReference type="GeneID" id="887274"/>
<dbReference type="KEGG" id="mtu:Rv2333c"/>
<dbReference type="KEGG" id="mtv:RVBD_2333c"/>
<dbReference type="TubercuList" id="Rv2333c"/>
<dbReference type="eggNOG" id="COG0477">
    <property type="taxonomic scope" value="Bacteria"/>
</dbReference>
<dbReference type="InParanoid" id="P9WG91"/>
<dbReference type="OrthoDB" id="9781469at2"/>
<dbReference type="PhylomeDB" id="P9WG91"/>
<dbReference type="Proteomes" id="UP000001584">
    <property type="component" value="Chromosome"/>
</dbReference>
<dbReference type="GO" id="GO:0016020">
    <property type="term" value="C:membrane"/>
    <property type="evidence" value="ECO:0000318"/>
    <property type="project" value="GO_Central"/>
</dbReference>
<dbReference type="GO" id="GO:0005886">
    <property type="term" value="C:plasma membrane"/>
    <property type="evidence" value="ECO:0007669"/>
    <property type="project" value="UniProtKB-SubCell"/>
</dbReference>
<dbReference type="GO" id="GO:0022857">
    <property type="term" value="F:transmembrane transporter activity"/>
    <property type="evidence" value="ECO:0007669"/>
    <property type="project" value="InterPro"/>
</dbReference>
<dbReference type="GO" id="GO:0046677">
    <property type="term" value="P:response to antibiotic"/>
    <property type="evidence" value="ECO:0007669"/>
    <property type="project" value="UniProtKB-KW"/>
</dbReference>
<dbReference type="CDD" id="cd17321">
    <property type="entry name" value="MFS_MMR_MDR_like"/>
    <property type="match status" value="1"/>
</dbReference>
<dbReference type="Gene3D" id="1.20.1250.20">
    <property type="entry name" value="MFS general substrate transporter like domains"/>
    <property type="match status" value="1"/>
</dbReference>
<dbReference type="Gene3D" id="1.20.1720.10">
    <property type="entry name" value="Multidrug resistance protein D"/>
    <property type="match status" value="1"/>
</dbReference>
<dbReference type="InterPro" id="IPR004638">
    <property type="entry name" value="EmrB-like"/>
</dbReference>
<dbReference type="InterPro" id="IPR011701">
    <property type="entry name" value="MFS"/>
</dbReference>
<dbReference type="InterPro" id="IPR020846">
    <property type="entry name" value="MFS_dom"/>
</dbReference>
<dbReference type="InterPro" id="IPR036259">
    <property type="entry name" value="MFS_trans_sf"/>
</dbReference>
<dbReference type="NCBIfam" id="TIGR00711">
    <property type="entry name" value="efflux_EmrB"/>
    <property type="match status" value="1"/>
</dbReference>
<dbReference type="PANTHER" id="PTHR42718">
    <property type="entry name" value="MAJOR FACILITATOR SUPERFAMILY MULTIDRUG TRANSPORTER MFSC"/>
    <property type="match status" value="1"/>
</dbReference>
<dbReference type="PANTHER" id="PTHR42718:SF9">
    <property type="entry name" value="MAJOR FACILITATOR SUPERFAMILY MULTIDRUG TRANSPORTER MFSC"/>
    <property type="match status" value="1"/>
</dbReference>
<dbReference type="Pfam" id="PF07690">
    <property type="entry name" value="MFS_1"/>
    <property type="match status" value="1"/>
</dbReference>
<dbReference type="PRINTS" id="PR01036">
    <property type="entry name" value="TCRTETB"/>
</dbReference>
<dbReference type="SUPFAM" id="SSF103473">
    <property type="entry name" value="MFS general substrate transporter"/>
    <property type="match status" value="1"/>
</dbReference>
<dbReference type="PROSITE" id="PS50850">
    <property type="entry name" value="MFS"/>
    <property type="match status" value="1"/>
</dbReference>